<organism>
    <name type="scientific">Aliivibrio salmonicida (strain LFI1238)</name>
    <name type="common">Vibrio salmonicida (strain LFI1238)</name>
    <dbReference type="NCBI Taxonomy" id="316275"/>
    <lineage>
        <taxon>Bacteria</taxon>
        <taxon>Pseudomonadati</taxon>
        <taxon>Pseudomonadota</taxon>
        <taxon>Gammaproteobacteria</taxon>
        <taxon>Vibrionales</taxon>
        <taxon>Vibrionaceae</taxon>
        <taxon>Aliivibrio</taxon>
    </lineage>
</organism>
<feature type="chain" id="PRO_1000115717" description="1-deoxy-D-xylulose-5-phosphate synthase">
    <location>
        <begin position="1"/>
        <end position="627"/>
    </location>
</feature>
<feature type="binding site" evidence="1">
    <location>
        <position position="80"/>
    </location>
    <ligand>
        <name>thiamine diphosphate</name>
        <dbReference type="ChEBI" id="CHEBI:58937"/>
    </ligand>
</feature>
<feature type="binding site" evidence="1">
    <location>
        <begin position="121"/>
        <end position="123"/>
    </location>
    <ligand>
        <name>thiamine diphosphate</name>
        <dbReference type="ChEBI" id="CHEBI:58937"/>
    </ligand>
</feature>
<feature type="binding site" evidence="1">
    <location>
        <position position="152"/>
    </location>
    <ligand>
        <name>Mg(2+)</name>
        <dbReference type="ChEBI" id="CHEBI:18420"/>
    </ligand>
</feature>
<feature type="binding site" evidence="1">
    <location>
        <begin position="153"/>
        <end position="154"/>
    </location>
    <ligand>
        <name>thiamine diphosphate</name>
        <dbReference type="ChEBI" id="CHEBI:58937"/>
    </ligand>
</feature>
<feature type="binding site" evidence="1">
    <location>
        <position position="181"/>
    </location>
    <ligand>
        <name>Mg(2+)</name>
        <dbReference type="ChEBI" id="CHEBI:18420"/>
    </ligand>
</feature>
<feature type="binding site" evidence="1">
    <location>
        <position position="181"/>
    </location>
    <ligand>
        <name>thiamine diphosphate</name>
        <dbReference type="ChEBI" id="CHEBI:58937"/>
    </ligand>
</feature>
<feature type="binding site" evidence="1">
    <location>
        <position position="288"/>
    </location>
    <ligand>
        <name>thiamine diphosphate</name>
        <dbReference type="ChEBI" id="CHEBI:58937"/>
    </ligand>
</feature>
<feature type="binding site" evidence="1">
    <location>
        <position position="370"/>
    </location>
    <ligand>
        <name>thiamine diphosphate</name>
        <dbReference type="ChEBI" id="CHEBI:58937"/>
    </ligand>
</feature>
<accession>B6EIA7</accession>
<reference key="1">
    <citation type="journal article" date="2008" name="BMC Genomics">
        <title>The genome sequence of the fish pathogen Aliivibrio salmonicida strain LFI1238 shows extensive evidence of gene decay.</title>
        <authorList>
            <person name="Hjerde E."/>
            <person name="Lorentzen M.S."/>
            <person name="Holden M.T."/>
            <person name="Seeger K."/>
            <person name="Paulsen S."/>
            <person name="Bason N."/>
            <person name="Churcher C."/>
            <person name="Harris D."/>
            <person name="Norbertczak H."/>
            <person name="Quail M.A."/>
            <person name="Sanders S."/>
            <person name="Thurston S."/>
            <person name="Parkhill J."/>
            <person name="Willassen N.P."/>
            <person name="Thomson N.R."/>
        </authorList>
    </citation>
    <scope>NUCLEOTIDE SEQUENCE [LARGE SCALE GENOMIC DNA]</scope>
    <source>
        <strain>LFI1238</strain>
    </source>
</reference>
<gene>
    <name evidence="1" type="primary">dxs</name>
    <name type="ordered locus">VSAL_I0933</name>
</gene>
<dbReference type="EC" id="2.2.1.7" evidence="1"/>
<dbReference type="EMBL" id="FM178379">
    <property type="protein sequence ID" value="CAQ78618.1"/>
    <property type="molecule type" value="Genomic_DNA"/>
</dbReference>
<dbReference type="RefSeq" id="WP_012549704.1">
    <property type="nucleotide sequence ID" value="NC_011312.1"/>
</dbReference>
<dbReference type="SMR" id="B6EIA7"/>
<dbReference type="KEGG" id="vsa:VSAL_I0933"/>
<dbReference type="eggNOG" id="COG1154">
    <property type="taxonomic scope" value="Bacteria"/>
</dbReference>
<dbReference type="HOGENOM" id="CLU_009227_1_4_6"/>
<dbReference type="UniPathway" id="UPA00064">
    <property type="reaction ID" value="UER00091"/>
</dbReference>
<dbReference type="Proteomes" id="UP000001730">
    <property type="component" value="Chromosome 1"/>
</dbReference>
<dbReference type="GO" id="GO:0005829">
    <property type="term" value="C:cytosol"/>
    <property type="evidence" value="ECO:0007669"/>
    <property type="project" value="TreeGrafter"/>
</dbReference>
<dbReference type="GO" id="GO:0008661">
    <property type="term" value="F:1-deoxy-D-xylulose-5-phosphate synthase activity"/>
    <property type="evidence" value="ECO:0007669"/>
    <property type="project" value="UniProtKB-UniRule"/>
</dbReference>
<dbReference type="GO" id="GO:0000287">
    <property type="term" value="F:magnesium ion binding"/>
    <property type="evidence" value="ECO:0007669"/>
    <property type="project" value="UniProtKB-UniRule"/>
</dbReference>
<dbReference type="GO" id="GO:0030976">
    <property type="term" value="F:thiamine pyrophosphate binding"/>
    <property type="evidence" value="ECO:0007669"/>
    <property type="project" value="UniProtKB-UniRule"/>
</dbReference>
<dbReference type="GO" id="GO:0052865">
    <property type="term" value="P:1-deoxy-D-xylulose 5-phosphate biosynthetic process"/>
    <property type="evidence" value="ECO:0007669"/>
    <property type="project" value="UniProtKB-UniPathway"/>
</dbReference>
<dbReference type="GO" id="GO:0019288">
    <property type="term" value="P:isopentenyl diphosphate biosynthetic process, methylerythritol 4-phosphate pathway"/>
    <property type="evidence" value="ECO:0007669"/>
    <property type="project" value="TreeGrafter"/>
</dbReference>
<dbReference type="GO" id="GO:0016114">
    <property type="term" value="P:terpenoid biosynthetic process"/>
    <property type="evidence" value="ECO:0007669"/>
    <property type="project" value="UniProtKB-UniRule"/>
</dbReference>
<dbReference type="GO" id="GO:0009228">
    <property type="term" value="P:thiamine biosynthetic process"/>
    <property type="evidence" value="ECO:0007669"/>
    <property type="project" value="UniProtKB-UniRule"/>
</dbReference>
<dbReference type="CDD" id="cd02007">
    <property type="entry name" value="TPP_DXS"/>
    <property type="match status" value="1"/>
</dbReference>
<dbReference type="CDD" id="cd07033">
    <property type="entry name" value="TPP_PYR_DXS_TK_like"/>
    <property type="match status" value="1"/>
</dbReference>
<dbReference type="FunFam" id="3.40.50.920:FF:000002">
    <property type="entry name" value="1-deoxy-D-xylulose-5-phosphate synthase"/>
    <property type="match status" value="1"/>
</dbReference>
<dbReference type="FunFam" id="3.40.50.970:FF:000005">
    <property type="entry name" value="1-deoxy-D-xylulose-5-phosphate synthase"/>
    <property type="match status" value="1"/>
</dbReference>
<dbReference type="Gene3D" id="3.40.50.920">
    <property type="match status" value="1"/>
</dbReference>
<dbReference type="Gene3D" id="3.40.50.970">
    <property type="match status" value="2"/>
</dbReference>
<dbReference type="HAMAP" id="MF_00315">
    <property type="entry name" value="DXP_synth"/>
    <property type="match status" value="1"/>
</dbReference>
<dbReference type="InterPro" id="IPR005477">
    <property type="entry name" value="Dxylulose-5-P_synthase"/>
</dbReference>
<dbReference type="InterPro" id="IPR029061">
    <property type="entry name" value="THDP-binding"/>
</dbReference>
<dbReference type="InterPro" id="IPR009014">
    <property type="entry name" value="Transketo_C/PFOR_II"/>
</dbReference>
<dbReference type="InterPro" id="IPR005475">
    <property type="entry name" value="Transketolase-like_Pyr-bd"/>
</dbReference>
<dbReference type="InterPro" id="IPR020826">
    <property type="entry name" value="Transketolase_BS"/>
</dbReference>
<dbReference type="InterPro" id="IPR033248">
    <property type="entry name" value="Transketolase_C"/>
</dbReference>
<dbReference type="InterPro" id="IPR049557">
    <property type="entry name" value="Transketolase_CS"/>
</dbReference>
<dbReference type="NCBIfam" id="TIGR00204">
    <property type="entry name" value="dxs"/>
    <property type="match status" value="1"/>
</dbReference>
<dbReference type="NCBIfam" id="NF003933">
    <property type="entry name" value="PRK05444.2-2"/>
    <property type="match status" value="1"/>
</dbReference>
<dbReference type="PANTHER" id="PTHR43322">
    <property type="entry name" value="1-D-DEOXYXYLULOSE 5-PHOSPHATE SYNTHASE-RELATED"/>
    <property type="match status" value="1"/>
</dbReference>
<dbReference type="PANTHER" id="PTHR43322:SF5">
    <property type="entry name" value="1-DEOXY-D-XYLULOSE-5-PHOSPHATE SYNTHASE, CHLOROPLASTIC"/>
    <property type="match status" value="1"/>
</dbReference>
<dbReference type="Pfam" id="PF13292">
    <property type="entry name" value="DXP_synthase_N"/>
    <property type="match status" value="1"/>
</dbReference>
<dbReference type="Pfam" id="PF02779">
    <property type="entry name" value="Transket_pyr"/>
    <property type="match status" value="1"/>
</dbReference>
<dbReference type="Pfam" id="PF02780">
    <property type="entry name" value="Transketolase_C"/>
    <property type="match status" value="1"/>
</dbReference>
<dbReference type="SMART" id="SM00861">
    <property type="entry name" value="Transket_pyr"/>
    <property type="match status" value="1"/>
</dbReference>
<dbReference type="SUPFAM" id="SSF52518">
    <property type="entry name" value="Thiamin diphosphate-binding fold (THDP-binding)"/>
    <property type="match status" value="2"/>
</dbReference>
<dbReference type="SUPFAM" id="SSF52922">
    <property type="entry name" value="TK C-terminal domain-like"/>
    <property type="match status" value="1"/>
</dbReference>
<dbReference type="PROSITE" id="PS00801">
    <property type="entry name" value="TRANSKETOLASE_1"/>
    <property type="match status" value="1"/>
</dbReference>
<dbReference type="PROSITE" id="PS00802">
    <property type="entry name" value="TRANSKETOLASE_2"/>
    <property type="match status" value="1"/>
</dbReference>
<proteinExistence type="inferred from homology"/>
<evidence type="ECO:0000255" key="1">
    <source>
        <dbReference type="HAMAP-Rule" id="MF_00315"/>
    </source>
</evidence>
<protein>
    <recommendedName>
        <fullName evidence="1">1-deoxy-D-xylulose-5-phosphate synthase</fullName>
        <ecNumber evidence="1">2.2.1.7</ecNumber>
    </recommendedName>
    <alternativeName>
        <fullName evidence="1">1-deoxyxylulose-5-phosphate synthase</fullName>
        <shortName evidence="1">DXP synthase</shortName>
        <shortName evidence="1">DXPS</shortName>
    </alternativeName>
</protein>
<name>DXS_ALISL</name>
<comment type="function">
    <text evidence="1">Catalyzes the acyloin condensation reaction between C atoms 2 and 3 of pyruvate and glyceraldehyde 3-phosphate to yield 1-deoxy-D-xylulose-5-phosphate (DXP).</text>
</comment>
<comment type="catalytic activity">
    <reaction evidence="1">
        <text>D-glyceraldehyde 3-phosphate + pyruvate + H(+) = 1-deoxy-D-xylulose 5-phosphate + CO2</text>
        <dbReference type="Rhea" id="RHEA:12605"/>
        <dbReference type="ChEBI" id="CHEBI:15361"/>
        <dbReference type="ChEBI" id="CHEBI:15378"/>
        <dbReference type="ChEBI" id="CHEBI:16526"/>
        <dbReference type="ChEBI" id="CHEBI:57792"/>
        <dbReference type="ChEBI" id="CHEBI:59776"/>
        <dbReference type="EC" id="2.2.1.7"/>
    </reaction>
</comment>
<comment type="cofactor">
    <cofactor evidence="1">
        <name>Mg(2+)</name>
        <dbReference type="ChEBI" id="CHEBI:18420"/>
    </cofactor>
    <text evidence="1">Binds 1 Mg(2+) ion per subunit.</text>
</comment>
<comment type="cofactor">
    <cofactor evidence="1">
        <name>thiamine diphosphate</name>
        <dbReference type="ChEBI" id="CHEBI:58937"/>
    </cofactor>
    <text evidence="1">Binds 1 thiamine pyrophosphate per subunit.</text>
</comment>
<comment type="pathway">
    <text evidence="1">Metabolic intermediate biosynthesis; 1-deoxy-D-xylulose 5-phosphate biosynthesis; 1-deoxy-D-xylulose 5-phosphate from D-glyceraldehyde 3-phosphate and pyruvate: step 1/1.</text>
</comment>
<comment type="subunit">
    <text evidence="1">Homodimer.</text>
</comment>
<comment type="similarity">
    <text evidence="1">Belongs to the transketolase family. DXPS subfamily.</text>
</comment>
<keyword id="KW-0414">Isoprene biosynthesis</keyword>
<keyword id="KW-0460">Magnesium</keyword>
<keyword id="KW-0479">Metal-binding</keyword>
<keyword id="KW-0784">Thiamine biosynthesis</keyword>
<keyword id="KW-0786">Thiamine pyrophosphate</keyword>
<keyword id="KW-0808">Transferase</keyword>
<sequence length="627" mass="68703">MSLDISKYPILALANTPDELRSLPKESLPALCDELRAYLLKSVSKSSGHLASGLGVVELTVALHYVYNTPFDQLIWDVGHQAYPHKILTGRREKLSTIRQKDGLHPFPWRDESEYDVLSVGHSSTSISAALGLAICAEKEQANRKVISVIGDGAITAGMAFEALNHAGDIHPDMLVVLNDNEMSISENVGALNNQLARVLSGSLYTSIREGGKKVLSGTPTIKELLKRTEEHIKGMVIPGTMFEELGFNYIGPVDGHDVNELVRTLKNMRNLKGPQFLHIMTKKGKGYEPAEKDPISYHGVPKFDPSNHSLPKSSGGKPTFSNIFGDFLCDMAKDDDKLMAITPAMREGSGMVRFSKEFPGQYFDTAIAEQHAVTLASGMAIAGYNPIVAIYSTFLQRGYDQLIHDVAIMNLPVMFAIDRAGLVGADGQTHQGAFDISFMRCIPNMVIMTPSDENECRQMLYTGHKHTGPSAVRYPRGSATGIEVNKEMQALEIGKGRLIRETKITEKGERVAILNFGTFLSNSVEAAEKLDATVADMRFAKPLDETLLCELVTSHDVLVTIEENAISGGAGSGVIEFLMKNRLIKPVLQLGLPDQFIAQGTQEEMHAELMLDATGIEKQIRDYLDL</sequence>